<feature type="chain" id="PRO_0000117625" description="NADH-ubiquinone oxidoreductase chain 2">
    <location>
        <begin position="1"/>
        <end position="347"/>
    </location>
</feature>
<feature type="transmembrane region" description="Helical" evidence="3">
    <location>
        <begin position="3"/>
        <end position="23"/>
    </location>
</feature>
<feature type="transmembrane region" description="Helical" evidence="3">
    <location>
        <begin position="25"/>
        <end position="45"/>
    </location>
</feature>
<feature type="transmembrane region" description="Helical" evidence="3">
    <location>
        <begin position="59"/>
        <end position="79"/>
    </location>
</feature>
<feature type="transmembrane region" description="Helical" evidence="3">
    <location>
        <begin position="89"/>
        <end position="109"/>
    </location>
</feature>
<feature type="transmembrane region" description="Helical" evidence="3">
    <location>
        <begin position="149"/>
        <end position="169"/>
    </location>
</feature>
<feature type="transmembrane region" description="Helical" evidence="3">
    <location>
        <begin position="178"/>
        <end position="198"/>
    </location>
</feature>
<feature type="transmembrane region" description="Helical" evidence="3">
    <location>
        <begin position="200"/>
        <end position="220"/>
    </location>
</feature>
<feature type="transmembrane region" description="Helical" evidence="3">
    <location>
        <begin position="237"/>
        <end position="257"/>
    </location>
</feature>
<feature type="transmembrane region" description="Helical" evidence="3">
    <location>
        <begin position="274"/>
        <end position="294"/>
    </location>
</feature>
<feature type="transmembrane region" description="Helical" evidence="3">
    <location>
        <begin position="325"/>
        <end position="345"/>
    </location>
</feature>
<feature type="helix" evidence="6">
    <location>
        <begin position="3"/>
        <end position="22"/>
    </location>
</feature>
<feature type="helix" evidence="6">
    <location>
        <begin position="26"/>
        <end position="44"/>
    </location>
</feature>
<feature type="helix" evidence="6">
    <location>
        <begin position="50"/>
        <end position="80"/>
    </location>
</feature>
<feature type="strand" evidence="6">
    <location>
        <begin position="85"/>
        <end position="87"/>
    </location>
</feature>
<feature type="helix" evidence="6">
    <location>
        <begin position="92"/>
        <end position="106"/>
    </location>
</feature>
<feature type="turn" evidence="8">
    <location>
        <begin position="109"/>
        <end position="113"/>
    </location>
</feature>
<feature type="helix" evidence="6">
    <location>
        <begin position="114"/>
        <end position="121"/>
    </location>
</feature>
<feature type="helix" evidence="6">
    <location>
        <begin position="124"/>
        <end position="132"/>
    </location>
</feature>
<feature type="helix" evidence="6">
    <location>
        <begin position="133"/>
        <end position="135"/>
    </location>
</feature>
<feature type="helix" evidence="6">
    <location>
        <begin position="136"/>
        <end position="144"/>
    </location>
</feature>
<feature type="helix" evidence="6">
    <location>
        <begin position="146"/>
        <end position="148"/>
    </location>
</feature>
<feature type="helix" evidence="6">
    <location>
        <begin position="151"/>
        <end position="169"/>
    </location>
</feature>
<feature type="helix" evidence="6">
    <location>
        <begin position="175"/>
        <end position="193"/>
    </location>
</feature>
<feature type="turn" evidence="6">
    <location>
        <begin position="194"/>
        <end position="196"/>
    </location>
</feature>
<feature type="helix" evidence="6">
    <location>
        <begin position="198"/>
        <end position="221"/>
    </location>
</feature>
<feature type="helix" evidence="6">
    <location>
        <begin position="227"/>
        <end position="230"/>
    </location>
</feature>
<feature type="helix" evidence="6">
    <location>
        <begin position="231"/>
        <end position="235"/>
    </location>
</feature>
<feature type="helix" evidence="6">
    <location>
        <begin position="238"/>
        <end position="251"/>
    </location>
</feature>
<feature type="strand" evidence="5">
    <location>
        <begin position="255"/>
        <end position="257"/>
    </location>
</feature>
<feature type="helix" evidence="6">
    <location>
        <begin position="260"/>
        <end position="272"/>
    </location>
</feature>
<feature type="helix" evidence="6">
    <location>
        <begin position="277"/>
        <end position="300"/>
    </location>
</feature>
<feature type="strand" evidence="7">
    <location>
        <begin position="307"/>
        <end position="309"/>
    </location>
</feature>
<feature type="helix" evidence="6">
    <location>
        <begin position="311"/>
        <end position="314"/>
    </location>
</feature>
<feature type="helix" evidence="6">
    <location>
        <begin position="326"/>
        <end position="334"/>
    </location>
</feature>
<feature type="helix" evidence="6">
    <location>
        <begin position="337"/>
        <end position="346"/>
    </location>
</feature>
<reference key="1">
    <citation type="journal article" date="1998" name="J. Mol. Evol.">
        <title>The complete mitochondrial DNA sequence of the pig (Sus scrofa).</title>
        <authorList>
            <person name="Ursing B.M."/>
            <person name="Arnason U."/>
        </authorList>
    </citation>
    <scope>NUCLEOTIDE SEQUENCE [GENOMIC DNA]</scope>
</reference>
<reference key="2">
    <citation type="journal article" date="1999" name="Gene">
        <title>Complete nucleotide sequence of pig (Sus scrofa) mitochondrial genome and dating evolutionary divergence within artiodactyla.</title>
        <authorList>
            <person name="Lin C.S."/>
            <person name="Sun Y.L."/>
            <person name="Liu C.Y."/>
            <person name="Yang P.C."/>
            <person name="Chang L.C."/>
            <person name="Cheng I.C."/>
            <person name="Mao S.J.T."/>
            <person name="Huang M.C."/>
        </authorList>
    </citation>
    <scope>NUCLEOTIDE SEQUENCE [LARGE SCALE GENOMIC DNA]</scope>
    <source>
        <strain>Landrace</strain>
    </source>
</reference>
<proteinExistence type="evidence at protein level"/>
<keyword id="KW-0002">3D-structure</keyword>
<keyword id="KW-0249">Electron transport</keyword>
<keyword id="KW-0472">Membrane</keyword>
<keyword id="KW-0496">Mitochondrion</keyword>
<keyword id="KW-0999">Mitochondrion inner membrane</keyword>
<keyword id="KW-0520">NAD</keyword>
<keyword id="KW-1185">Reference proteome</keyword>
<keyword id="KW-0679">Respiratory chain</keyword>
<keyword id="KW-1278">Translocase</keyword>
<keyword id="KW-0812">Transmembrane</keyword>
<keyword id="KW-1133">Transmembrane helix</keyword>
<keyword id="KW-0813">Transport</keyword>
<keyword id="KW-0830">Ubiquinone</keyword>
<gene>
    <name evidence="1" type="primary">MT-ND2</name>
    <name type="synonym">MTND2</name>
    <name type="synonym">NADH2</name>
    <name type="synonym">ND2</name>
</gene>
<name>NU2M_PIG</name>
<geneLocation type="mitochondrion"/>
<dbReference type="EC" id="7.1.1.2" evidence="1"/>
<dbReference type="EMBL" id="AJ002189">
    <property type="protein sequence ID" value="CAA05230.1"/>
    <property type="molecule type" value="Genomic_DNA"/>
</dbReference>
<dbReference type="EMBL" id="AF034253">
    <property type="protein sequence ID" value="AAD34186.1"/>
    <property type="molecule type" value="Genomic_DNA"/>
</dbReference>
<dbReference type="PIR" id="T10973">
    <property type="entry name" value="T10973"/>
</dbReference>
<dbReference type="RefSeq" id="NP_008635.1">
    <property type="nucleotide sequence ID" value="NC_000845.1"/>
</dbReference>
<dbReference type="PDB" id="5GPN">
    <property type="method" value="EM"/>
    <property type="resolution" value="5.40 A"/>
    <property type="chains" value="f=1-347"/>
</dbReference>
<dbReference type="PDB" id="5GUP">
    <property type="method" value="EM"/>
    <property type="resolution" value="4.00 A"/>
    <property type="chains" value="i=1-347"/>
</dbReference>
<dbReference type="PDB" id="7V2C">
    <property type="method" value="EM"/>
    <property type="resolution" value="2.90 A"/>
    <property type="chains" value="i=1-347"/>
</dbReference>
<dbReference type="PDB" id="7V2D">
    <property type="method" value="EM"/>
    <property type="resolution" value="3.30 A"/>
    <property type="chains" value="i=1-347"/>
</dbReference>
<dbReference type="PDB" id="7V2E">
    <property type="method" value="EM"/>
    <property type="resolution" value="2.80 A"/>
    <property type="chains" value="i=1-347"/>
</dbReference>
<dbReference type="PDB" id="7V2F">
    <property type="method" value="EM"/>
    <property type="resolution" value="3.10 A"/>
    <property type="chains" value="i=1-347"/>
</dbReference>
<dbReference type="PDB" id="7V2H">
    <property type="method" value="EM"/>
    <property type="resolution" value="2.50 A"/>
    <property type="chains" value="i=1-347"/>
</dbReference>
<dbReference type="PDB" id="7V2K">
    <property type="method" value="EM"/>
    <property type="resolution" value="2.70 A"/>
    <property type="chains" value="i=1-347"/>
</dbReference>
<dbReference type="PDB" id="7V2R">
    <property type="method" value="EM"/>
    <property type="resolution" value="2.60 A"/>
    <property type="chains" value="i=1-347"/>
</dbReference>
<dbReference type="PDB" id="7V30">
    <property type="method" value="EM"/>
    <property type="resolution" value="2.70 A"/>
    <property type="chains" value="i=1-347"/>
</dbReference>
<dbReference type="PDB" id="7V31">
    <property type="method" value="EM"/>
    <property type="resolution" value="2.90 A"/>
    <property type="chains" value="i=1-347"/>
</dbReference>
<dbReference type="PDB" id="7V32">
    <property type="method" value="EM"/>
    <property type="resolution" value="3.20 A"/>
    <property type="chains" value="i=1-347"/>
</dbReference>
<dbReference type="PDB" id="7V33">
    <property type="method" value="EM"/>
    <property type="resolution" value="2.60 A"/>
    <property type="chains" value="i=1-347"/>
</dbReference>
<dbReference type="PDB" id="7V3M">
    <property type="method" value="EM"/>
    <property type="resolution" value="2.90 A"/>
    <property type="chains" value="i=1-347"/>
</dbReference>
<dbReference type="PDB" id="7VBL">
    <property type="method" value="EM"/>
    <property type="resolution" value="2.60 A"/>
    <property type="chains" value="i=1-347"/>
</dbReference>
<dbReference type="PDB" id="7VBP">
    <property type="method" value="EM"/>
    <property type="resolution" value="2.80 A"/>
    <property type="chains" value="i=1-347"/>
</dbReference>
<dbReference type="PDB" id="7VC0">
    <property type="method" value="EM"/>
    <property type="resolution" value="2.60 A"/>
    <property type="chains" value="i=1-347"/>
</dbReference>
<dbReference type="PDB" id="7VWL">
    <property type="method" value="EM"/>
    <property type="resolution" value="2.70 A"/>
    <property type="chains" value="i=1-347"/>
</dbReference>
<dbReference type="PDB" id="7VXS">
    <property type="method" value="EM"/>
    <property type="resolution" value="2.90 A"/>
    <property type="chains" value="i=1-347"/>
</dbReference>
<dbReference type="PDB" id="7VY1">
    <property type="method" value="EM"/>
    <property type="resolution" value="3.30 A"/>
    <property type="chains" value="i=1-347"/>
</dbReference>
<dbReference type="PDB" id="7VY9">
    <property type="method" value="EM"/>
    <property type="resolution" value="2.90 A"/>
    <property type="chains" value="i=1-347"/>
</dbReference>
<dbReference type="PDB" id="7VYE">
    <property type="method" value="EM"/>
    <property type="resolution" value="3.10 A"/>
    <property type="chains" value="i=1-347"/>
</dbReference>
<dbReference type="PDB" id="7VYG">
    <property type="method" value="EM"/>
    <property type="resolution" value="2.90 A"/>
    <property type="chains" value="i=1-347"/>
</dbReference>
<dbReference type="PDB" id="7VYI">
    <property type="method" value="EM"/>
    <property type="resolution" value="3.10 A"/>
    <property type="chains" value="i=1-347"/>
</dbReference>
<dbReference type="PDB" id="7VYS">
    <property type="method" value="EM"/>
    <property type="resolution" value="2.50 A"/>
    <property type="chains" value="i=1-347"/>
</dbReference>
<dbReference type="PDB" id="7VZ8">
    <property type="method" value="EM"/>
    <property type="resolution" value="2.70 A"/>
    <property type="chains" value="i=1-347"/>
</dbReference>
<dbReference type="PDB" id="7VZV">
    <property type="method" value="EM"/>
    <property type="resolution" value="3.20 A"/>
    <property type="chains" value="i=1-347"/>
</dbReference>
<dbReference type="PDB" id="7VZW">
    <property type="method" value="EM"/>
    <property type="resolution" value="3.20 A"/>
    <property type="chains" value="i=1-347"/>
</dbReference>
<dbReference type="PDB" id="7W00">
    <property type="method" value="EM"/>
    <property type="resolution" value="3.50 A"/>
    <property type="chains" value="i=1-347"/>
</dbReference>
<dbReference type="PDB" id="7W0H">
    <property type="method" value="EM"/>
    <property type="resolution" value="3.40 A"/>
    <property type="chains" value="i=1-347"/>
</dbReference>
<dbReference type="PDB" id="7W0R">
    <property type="method" value="EM"/>
    <property type="resolution" value="2.80 A"/>
    <property type="chains" value="i=1-347"/>
</dbReference>
<dbReference type="PDB" id="7W0Y">
    <property type="method" value="EM"/>
    <property type="resolution" value="3.40 A"/>
    <property type="chains" value="i=1-347"/>
</dbReference>
<dbReference type="PDB" id="7W1O">
    <property type="method" value="EM"/>
    <property type="resolution" value="3.50 A"/>
    <property type="chains" value="i=1-347"/>
</dbReference>
<dbReference type="PDB" id="7W1P">
    <property type="method" value="EM"/>
    <property type="resolution" value="3.10 A"/>
    <property type="chains" value="i=1-347"/>
</dbReference>
<dbReference type="PDB" id="7W1T">
    <property type="method" value="EM"/>
    <property type="resolution" value="3.00 A"/>
    <property type="chains" value="i=1-347"/>
</dbReference>
<dbReference type="PDB" id="7W1U">
    <property type="method" value="EM"/>
    <property type="resolution" value="3.20 A"/>
    <property type="chains" value="i=1-347"/>
</dbReference>
<dbReference type="PDB" id="7W1V">
    <property type="method" value="EM"/>
    <property type="resolution" value="3.00 A"/>
    <property type="chains" value="i=1-347"/>
</dbReference>
<dbReference type="PDB" id="7W1Z">
    <property type="method" value="EM"/>
    <property type="resolution" value="2.60 A"/>
    <property type="chains" value="i=1-347"/>
</dbReference>
<dbReference type="PDB" id="7W20">
    <property type="method" value="EM"/>
    <property type="resolution" value="3.00 A"/>
    <property type="chains" value="i=1-347"/>
</dbReference>
<dbReference type="PDB" id="7W2K">
    <property type="method" value="EM"/>
    <property type="resolution" value="2.90 A"/>
    <property type="chains" value="i=1-347"/>
</dbReference>
<dbReference type="PDB" id="7W2L">
    <property type="method" value="EM"/>
    <property type="resolution" value="3.00 A"/>
    <property type="chains" value="i=1-347"/>
</dbReference>
<dbReference type="PDB" id="7W2R">
    <property type="method" value="EM"/>
    <property type="resolution" value="2.90 A"/>
    <property type="chains" value="i=1-347"/>
</dbReference>
<dbReference type="PDB" id="7W2U">
    <property type="method" value="EM"/>
    <property type="resolution" value="2.60 A"/>
    <property type="chains" value="i=1-347"/>
</dbReference>
<dbReference type="PDB" id="7W2Y">
    <property type="method" value="EM"/>
    <property type="resolution" value="2.70 A"/>
    <property type="chains" value="i=1-347"/>
</dbReference>
<dbReference type="PDB" id="7W31">
    <property type="method" value="EM"/>
    <property type="resolution" value="3.10 A"/>
    <property type="chains" value="i=1-347"/>
</dbReference>
<dbReference type="PDB" id="7W32">
    <property type="method" value="EM"/>
    <property type="resolution" value="2.90 A"/>
    <property type="chains" value="i=1-347"/>
</dbReference>
<dbReference type="PDB" id="7W35">
    <property type="method" value="EM"/>
    <property type="resolution" value="3.00 A"/>
    <property type="chains" value="i=1-347"/>
</dbReference>
<dbReference type="PDB" id="7W4C">
    <property type="method" value="EM"/>
    <property type="resolution" value="2.70 A"/>
    <property type="chains" value="i=1-347"/>
</dbReference>
<dbReference type="PDB" id="7W4D">
    <property type="method" value="EM"/>
    <property type="resolution" value="3.00 A"/>
    <property type="chains" value="i=1-347"/>
</dbReference>
<dbReference type="PDB" id="7W4E">
    <property type="method" value="EM"/>
    <property type="resolution" value="3.00 A"/>
    <property type="chains" value="i=1-347"/>
</dbReference>
<dbReference type="PDB" id="7W4F">
    <property type="method" value="EM"/>
    <property type="resolution" value="2.70 A"/>
    <property type="chains" value="i=1-347"/>
</dbReference>
<dbReference type="PDB" id="7W4G">
    <property type="method" value="EM"/>
    <property type="resolution" value="3.10 A"/>
    <property type="chains" value="i=1-347"/>
</dbReference>
<dbReference type="PDB" id="7W4J">
    <property type="method" value="EM"/>
    <property type="resolution" value="3.20 A"/>
    <property type="chains" value="i=1-347"/>
</dbReference>
<dbReference type="PDB" id="7W4K">
    <property type="method" value="EM"/>
    <property type="resolution" value="3.20 A"/>
    <property type="chains" value="i=1-347"/>
</dbReference>
<dbReference type="PDB" id="7W4L">
    <property type="method" value="EM"/>
    <property type="resolution" value="3.10 A"/>
    <property type="chains" value="i=1-347"/>
</dbReference>
<dbReference type="PDB" id="7W4M">
    <property type="method" value="EM"/>
    <property type="resolution" value="3.30 A"/>
    <property type="chains" value="i=1-347"/>
</dbReference>
<dbReference type="PDB" id="7W4N">
    <property type="method" value="EM"/>
    <property type="resolution" value="3.00 A"/>
    <property type="chains" value="i=1-347"/>
</dbReference>
<dbReference type="PDB" id="7W4Q">
    <property type="method" value="EM"/>
    <property type="resolution" value="3.30 A"/>
    <property type="chains" value="i=1-347"/>
</dbReference>
<dbReference type="PDB" id="8UD1">
    <property type="method" value="EM"/>
    <property type="resolution" value="2.10 A"/>
    <property type="chains" value="1N=1-347"/>
</dbReference>
<dbReference type="PDB" id="8UEO">
    <property type="method" value="EM"/>
    <property type="resolution" value="3.80 A"/>
    <property type="chains" value="1N=1-347"/>
</dbReference>
<dbReference type="PDB" id="8UEP">
    <property type="method" value="EM"/>
    <property type="resolution" value="3.40 A"/>
    <property type="chains" value="1N=1-347"/>
</dbReference>
<dbReference type="PDB" id="8UEQ">
    <property type="method" value="EM"/>
    <property type="resolution" value="3.40 A"/>
    <property type="chains" value="1N=1-347"/>
</dbReference>
<dbReference type="PDB" id="8UER">
    <property type="method" value="EM"/>
    <property type="resolution" value="3.50 A"/>
    <property type="chains" value="1N=1-347"/>
</dbReference>
<dbReference type="PDB" id="8UES">
    <property type="method" value="EM"/>
    <property type="resolution" value="3.60 A"/>
    <property type="chains" value="1N=1-347"/>
</dbReference>
<dbReference type="PDB" id="8UET">
    <property type="method" value="EM"/>
    <property type="resolution" value="3.70 A"/>
    <property type="chains" value="1N=1-347"/>
</dbReference>
<dbReference type="PDB" id="8UEU">
    <property type="method" value="EM"/>
    <property type="resolution" value="3.60 A"/>
    <property type="chains" value="1N=1-347"/>
</dbReference>
<dbReference type="PDB" id="8UEV">
    <property type="method" value="EM"/>
    <property type="resolution" value="3.70 A"/>
    <property type="chains" value="1N=1-347"/>
</dbReference>
<dbReference type="PDB" id="8UEW">
    <property type="method" value="EM"/>
    <property type="resolution" value="3.60 A"/>
    <property type="chains" value="1N=1-347"/>
</dbReference>
<dbReference type="PDB" id="8UEX">
    <property type="method" value="EM"/>
    <property type="resolution" value="3.90 A"/>
    <property type="chains" value="1N=1-347"/>
</dbReference>
<dbReference type="PDB" id="8UEY">
    <property type="method" value="EM"/>
    <property type="resolution" value="3.60 A"/>
    <property type="chains" value="1N=1-347"/>
</dbReference>
<dbReference type="PDB" id="8UEZ">
    <property type="method" value="EM"/>
    <property type="resolution" value="3.50 A"/>
    <property type="chains" value="1N=1-347"/>
</dbReference>
<dbReference type="PDB" id="8UGH">
    <property type="method" value="EM"/>
    <property type="resolution" value="2.10 A"/>
    <property type="chains" value="1N=1-347"/>
</dbReference>
<dbReference type="PDB" id="8UGI">
    <property type="method" value="EM"/>
    <property type="resolution" value="2.10 A"/>
    <property type="chains" value="1N=1-347"/>
</dbReference>
<dbReference type="PDB" id="8UGJ">
    <property type="method" value="EM"/>
    <property type="resolution" value="2.30 A"/>
    <property type="chains" value="1N=1-347"/>
</dbReference>
<dbReference type="PDB" id="8UGN">
    <property type="method" value="EM"/>
    <property type="resolution" value="2.70 A"/>
    <property type="chains" value="1N/5N=1-347"/>
</dbReference>
<dbReference type="PDB" id="8UGR">
    <property type="method" value="EM"/>
    <property type="resolution" value="6.50 A"/>
    <property type="chains" value="1N/5N=1-347"/>
</dbReference>
<dbReference type="PDBsum" id="5GPN"/>
<dbReference type="PDBsum" id="5GUP"/>
<dbReference type="PDBsum" id="7V2C"/>
<dbReference type="PDBsum" id="7V2D"/>
<dbReference type="PDBsum" id="7V2E"/>
<dbReference type="PDBsum" id="7V2F"/>
<dbReference type="PDBsum" id="7V2H"/>
<dbReference type="PDBsum" id="7V2K"/>
<dbReference type="PDBsum" id="7V2R"/>
<dbReference type="PDBsum" id="7V30"/>
<dbReference type="PDBsum" id="7V31"/>
<dbReference type="PDBsum" id="7V32"/>
<dbReference type="PDBsum" id="7V33"/>
<dbReference type="PDBsum" id="7V3M"/>
<dbReference type="PDBsum" id="7VBL"/>
<dbReference type="PDBsum" id="7VBP"/>
<dbReference type="PDBsum" id="7VC0"/>
<dbReference type="PDBsum" id="7VWL"/>
<dbReference type="PDBsum" id="7VXS"/>
<dbReference type="PDBsum" id="7VY1"/>
<dbReference type="PDBsum" id="7VY9"/>
<dbReference type="PDBsum" id="7VYE"/>
<dbReference type="PDBsum" id="7VYG"/>
<dbReference type="PDBsum" id="7VYI"/>
<dbReference type="PDBsum" id="7VYS"/>
<dbReference type="PDBsum" id="7VZ8"/>
<dbReference type="PDBsum" id="7VZV"/>
<dbReference type="PDBsum" id="7VZW"/>
<dbReference type="PDBsum" id="7W00"/>
<dbReference type="PDBsum" id="7W0H"/>
<dbReference type="PDBsum" id="7W0R"/>
<dbReference type="PDBsum" id="7W0Y"/>
<dbReference type="PDBsum" id="7W1O"/>
<dbReference type="PDBsum" id="7W1P"/>
<dbReference type="PDBsum" id="7W1T"/>
<dbReference type="PDBsum" id="7W1U"/>
<dbReference type="PDBsum" id="7W1V"/>
<dbReference type="PDBsum" id="7W1Z"/>
<dbReference type="PDBsum" id="7W20"/>
<dbReference type="PDBsum" id="7W2K"/>
<dbReference type="PDBsum" id="7W2L"/>
<dbReference type="PDBsum" id="7W2R"/>
<dbReference type="PDBsum" id="7W2U"/>
<dbReference type="PDBsum" id="7W2Y"/>
<dbReference type="PDBsum" id="7W31"/>
<dbReference type="PDBsum" id="7W32"/>
<dbReference type="PDBsum" id="7W35"/>
<dbReference type="PDBsum" id="7W4C"/>
<dbReference type="PDBsum" id="7W4D"/>
<dbReference type="PDBsum" id="7W4E"/>
<dbReference type="PDBsum" id="7W4F"/>
<dbReference type="PDBsum" id="7W4G"/>
<dbReference type="PDBsum" id="7W4J"/>
<dbReference type="PDBsum" id="7W4K"/>
<dbReference type="PDBsum" id="7W4L"/>
<dbReference type="PDBsum" id="7W4M"/>
<dbReference type="PDBsum" id="7W4N"/>
<dbReference type="PDBsum" id="7W4Q"/>
<dbReference type="PDBsum" id="8UD1"/>
<dbReference type="PDBsum" id="8UEO"/>
<dbReference type="PDBsum" id="8UEP"/>
<dbReference type="PDBsum" id="8UEQ"/>
<dbReference type="PDBsum" id="8UER"/>
<dbReference type="PDBsum" id="8UES"/>
<dbReference type="PDBsum" id="8UET"/>
<dbReference type="PDBsum" id="8UEU"/>
<dbReference type="PDBsum" id="8UEV"/>
<dbReference type="PDBsum" id="8UEW"/>
<dbReference type="PDBsum" id="8UEX"/>
<dbReference type="PDBsum" id="8UEY"/>
<dbReference type="PDBsum" id="8UEZ"/>
<dbReference type="PDBsum" id="8UGH"/>
<dbReference type="PDBsum" id="8UGI"/>
<dbReference type="PDBsum" id="8UGJ"/>
<dbReference type="PDBsum" id="8UGN"/>
<dbReference type="PDBsum" id="8UGR"/>
<dbReference type="EMDB" id="EMD-42143"/>
<dbReference type="EMDB" id="EMD-42165"/>
<dbReference type="EMDB" id="EMD-42166"/>
<dbReference type="EMDB" id="EMD-42167"/>
<dbReference type="EMDB" id="EMD-42168"/>
<dbReference type="EMDB" id="EMD-42169"/>
<dbReference type="EMDB" id="EMD-42170"/>
<dbReference type="EMDB" id="EMD-42171"/>
<dbReference type="EMDB" id="EMD-42172"/>
<dbReference type="EMDB" id="EMD-42173"/>
<dbReference type="EMDB" id="EMD-42174"/>
<dbReference type="EMDB" id="EMD-42175"/>
<dbReference type="EMDB" id="EMD-42176"/>
<dbReference type="EMDB" id="EMD-42225"/>
<dbReference type="EMDB" id="EMD-42226"/>
<dbReference type="EMDB" id="EMD-42227"/>
<dbReference type="EMDB" id="EMD-42230"/>
<dbReference type="EMDB" id="EMD-42233"/>
<dbReference type="EMDB" id="EMD-9534"/>
<dbReference type="SMR" id="O79875"/>
<dbReference type="FunCoup" id="O79875">
    <property type="interactions" value="111"/>
</dbReference>
<dbReference type="STRING" id="9823.ENSSSCP00000019136"/>
<dbReference type="GlyGen" id="O79875">
    <property type="glycosylation" value="1 site"/>
</dbReference>
<dbReference type="PaxDb" id="9823-ENSSSCP00000019136"/>
<dbReference type="PeptideAtlas" id="O79875"/>
<dbReference type="Ensembl" id="ENSSSCT00000019664.4">
    <property type="protein sequence ID" value="ENSSSCP00000019136.3"/>
    <property type="gene ID" value="ENSSSCG00000018069.4"/>
</dbReference>
<dbReference type="Ensembl" id="ENSSSCT00070061666.1">
    <property type="protein sequence ID" value="ENSSSCP00070052579.1"/>
    <property type="gene ID" value="ENSSSCG00070030629.1"/>
</dbReference>
<dbReference type="Ensembl" id="ENSSSCT00085000011">
    <property type="protein sequence ID" value="ENSSSCP00085000003"/>
    <property type="gene ID" value="ENSSSCG00085000011"/>
</dbReference>
<dbReference type="Ensembl" id="ENSSSCT00090000011">
    <property type="protein sequence ID" value="ENSSSCP00090000003"/>
    <property type="gene ID" value="ENSSSCG00090000011"/>
</dbReference>
<dbReference type="Ensembl" id="ENSSSCT00105000011">
    <property type="protein sequence ID" value="ENSSSCP00105000003"/>
    <property type="gene ID" value="ENSSSCG00105000011"/>
</dbReference>
<dbReference type="Ensembl" id="ENSSSCT00110000011">
    <property type="protein sequence ID" value="ENSSSCP00110000003"/>
    <property type="gene ID" value="ENSSSCG00110000011"/>
</dbReference>
<dbReference type="Ensembl" id="ENSSSCT00115000011">
    <property type="protein sequence ID" value="ENSSSCP00115000003"/>
    <property type="gene ID" value="ENSSSCG00115000011"/>
</dbReference>
<dbReference type="Ensembl" id="ENSSSCT00130000011">
    <property type="protein sequence ID" value="ENSSSCP00130000003"/>
    <property type="gene ID" value="ENSSSCG00130000011"/>
</dbReference>
<dbReference type="GeneID" id="808502"/>
<dbReference type="KEGG" id="ssc:808502"/>
<dbReference type="CTD" id="4536"/>
<dbReference type="eggNOG" id="KOG4668">
    <property type="taxonomic scope" value="Eukaryota"/>
</dbReference>
<dbReference type="GeneTree" id="ENSGT00730000111348"/>
<dbReference type="InParanoid" id="O79875"/>
<dbReference type="OMA" id="HFWVPEV"/>
<dbReference type="OrthoDB" id="4092844at2759"/>
<dbReference type="Reactome" id="R-SSC-611105">
    <property type="pathway name" value="Respiratory electron transport"/>
</dbReference>
<dbReference type="Reactome" id="R-SSC-6799198">
    <property type="pathway name" value="Complex I biogenesis"/>
</dbReference>
<dbReference type="Proteomes" id="UP000008227">
    <property type="component" value="Mitochondrion"/>
</dbReference>
<dbReference type="Proteomes" id="UP000314985">
    <property type="component" value="Mitochondrion"/>
</dbReference>
<dbReference type="Proteomes" id="UP000694570">
    <property type="component" value="Unplaced"/>
</dbReference>
<dbReference type="Proteomes" id="UP000694571">
    <property type="component" value="Unplaced"/>
</dbReference>
<dbReference type="Proteomes" id="UP000694720">
    <property type="component" value="Unplaced"/>
</dbReference>
<dbReference type="Proteomes" id="UP000694722">
    <property type="component" value="Unplaced"/>
</dbReference>
<dbReference type="Proteomes" id="UP000694723">
    <property type="component" value="Unplaced"/>
</dbReference>
<dbReference type="Proteomes" id="UP000694724">
    <property type="component" value="Unplaced"/>
</dbReference>
<dbReference type="Proteomes" id="UP000694725">
    <property type="component" value="Unplaced"/>
</dbReference>
<dbReference type="Proteomes" id="UP000694726">
    <property type="component" value="Unplaced"/>
</dbReference>
<dbReference type="Proteomes" id="UP000694727">
    <property type="component" value="Unplaced"/>
</dbReference>
<dbReference type="Proteomes" id="UP000694728">
    <property type="component" value="Unplaced"/>
</dbReference>
<dbReference type="Bgee" id="ENSSSCG00000018069">
    <property type="expression patterns" value="Expressed in hypothalamus and 45 other cell types or tissues"/>
</dbReference>
<dbReference type="ExpressionAtlas" id="O79875">
    <property type="expression patterns" value="baseline and differential"/>
</dbReference>
<dbReference type="GO" id="GO:0005743">
    <property type="term" value="C:mitochondrial inner membrane"/>
    <property type="evidence" value="ECO:0000250"/>
    <property type="project" value="UniProtKB"/>
</dbReference>
<dbReference type="GO" id="GO:0045271">
    <property type="term" value="C:respiratory chain complex I"/>
    <property type="evidence" value="ECO:0000318"/>
    <property type="project" value="GO_Central"/>
</dbReference>
<dbReference type="GO" id="GO:0008137">
    <property type="term" value="F:NADH dehydrogenase (ubiquinone) activity"/>
    <property type="evidence" value="ECO:0000318"/>
    <property type="project" value="GO_Central"/>
</dbReference>
<dbReference type="GO" id="GO:0006120">
    <property type="term" value="P:mitochondrial electron transport, NADH to ubiquinone"/>
    <property type="evidence" value="ECO:0000318"/>
    <property type="project" value="GO_Central"/>
</dbReference>
<dbReference type="GO" id="GO:0032981">
    <property type="term" value="P:mitochondrial respiratory chain complex I assembly"/>
    <property type="evidence" value="ECO:0007669"/>
    <property type="project" value="Ensembl"/>
</dbReference>
<dbReference type="GO" id="GO:0072593">
    <property type="term" value="P:reactive oxygen species metabolic process"/>
    <property type="evidence" value="ECO:0007669"/>
    <property type="project" value="Ensembl"/>
</dbReference>
<dbReference type="InterPro" id="IPR050175">
    <property type="entry name" value="Complex_I_Subunit_2"/>
</dbReference>
<dbReference type="InterPro" id="IPR010933">
    <property type="entry name" value="NADH_DH_su2_C"/>
</dbReference>
<dbReference type="InterPro" id="IPR003917">
    <property type="entry name" value="NADH_UbQ_OxRdtase_chain2"/>
</dbReference>
<dbReference type="InterPro" id="IPR001750">
    <property type="entry name" value="ND/Mrp_TM"/>
</dbReference>
<dbReference type="PANTHER" id="PTHR46552">
    <property type="entry name" value="NADH-UBIQUINONE OXIDOREDUCTASE CHAIN 2"/>
    <property type="match status" value="1"/>
</dbReference>
<dbReference type="PANTHER" id="PTHR46552:SF1">
    <property type="entry name" value="NADH-UBIQUINONE OXIDOREDUCTASE CHAIN 2"/>
    <property type="match status" value="1"/>
</dbReference>
<dbReference type="Pfam" id="PF06444">
    <property type="entry name" value="NADH_dehy_S2_C"/>
    <property type="match status" value="1"/>
</dbReference>
<dbReference type="Pfam" id="PF00361">
    <property type="entry name" value="Proton_antipo_M"/>
    <property type="match status" value="1"/>
</dbReference>
<dbReference type="PRINTS" id="PR01436">
    <property type="entry name" value="NADHDHGNASE2"/>
</dbReference>
<organism>
    <name type="scientific">Sus scrofa</name>
    <name type="common">Pig</name>
    <dbReference type="NCBI Taxonomy" id="9823"/>
    <lineage>
        <taxon>Eukaryota</taxon>
        <taxon>Metazoa</taxon>
        <taxon>Chordata</taxon>
        <taxon>Craniata</taxon>
        <taxon>Vertebrata</taxon>
        <taxon>Euteleostomi</taxon>
        <taxon>Mammalia</taxon>
        <taxon>Eutheria</taxon>
        <taxon>Laurasiatheria</taxon>
        <taxon>Artiodactyla</taxon>
        <taxon>Suina</taxon>
        <taxon>Suidae</taxon>
        <taxon>Sus</taxon>
    </lineage>
</organism>
<comment type="function">
    <text evidence="1">Core subunit of the mitochondrial membrane respiratory chain NADH dehydrogenase (Complex I) which catalyzes electron transfer from NADH through the respiratory chain, using ubiquinone as an electron acceptor. Essential for the catalytic activity and assembly of complex I.</text>
</comment>
<comment type="catalytic activity">
    <reaction evidence="1">
        <text>a ubiquinone + NADH + 5 H(+)(in) = a ubiquinol + NAD(+) + 4 H(+)(out)</text>
        <dbReference type="Rhea" id="RHEA:29091"/>
        <dbReference type="Rhea" id="RHEA-COMP:9565"/>
        <dbReference type="Rhea" id="RHEA-COMP:9566"/>
        <dbReference type="ChEBI" id="CHEBI:15378"/>
        <dbReference type="ChEBI" id="CHEBI:16389"/>
        <dbReference type="ChEBI" id="CHEBI:17976"/>
        <dbReference type="ChEBI" id="CHEBI:57540"/>
        <dbReference type="ChEBI" id="CHEBI:57945"/>
        <dbReference type="EC" id="7.1.1.2"/>
    </reaction>
</comment>
<comment type="subunit">
    <text evidence="1 2">Core subunit of respiratory chain NADH dehydrogenase (Complex I) which is composed of 45 different subunits. Interacts with TMEM242 (By similarity).</text>
</comment>
<comment type="subcellular location">
    <subcellularLocation>
        <location evidence="2">Mitochondrion inner membrane</location>
        <topology evidence="3">Multi-pass membrane protein</topology>
    </subcellularLocation>
</comment>
<comment type="similarity">
    <text evidence="4">Belongs to the complex I subunit 2 family.</text>
</comment>
<accession>O79875</accession>
<evidence type="ECO:0000250" key="1">
    <source>
        <dbReference type="UniProtKB" id="P03891"/>
    </source>
</evidence>
<evidence type="ECO:0000250" key="2">
    <source>
        <dbReference type="UniProtKB" id="P03892"/>
    </source>
</evidence>
<evidence type="ECO:0000255" key="3"/>
<evidence type="ECO:0000305" key="4"/>
<evidence type="ECO:0007829" key="5">
    <source>
        <dbReference type="PDB" id="7V2C"/>
    </source>
</evidence>
<evidence type="ECO:0007829" key="6">
    <source>
        <dbReference type="PDB" id="7V2H"/>
    </source>
</evidence>
<evidence type="ECO:0007829" key="7">
    <source>
        <dbReference type="PDB" id="7V2K"/>
    </source>
</evidence>
<evidence type="ECO:0007829" key="8">
    <source>
        <dbReference type="PDB" id="7W4F"/>
    </source>
</evidence>
<sequence>MNPIIYTTLIMTVMSGTMLVMISSHWLLIWIGFEMNLLAMIPVLMKNFNPRATEAATKYFLTQATASMMLMMAIIINLLYSGQWTITKMFNPVAMTMMTMALAMKLGLSPFHFWVPEVTQGISLQAGLLLLTWQKLAPLSVLCQISQSINPNLMLTMAMLSILIGGWGGLNQTQLRKIMAYSSIAHMGWMTAVLPYNTTMTILNLLIYITMTLAMFMLLIHSSATTTLSLSHTWNKMPVITSLMMVTLLSMGGLPPLSGFMPKWMIIQEMTKNESIIMPTLMAMTALLNLYFYMRLAYSSSLTMFPSTNNMKMKWQFEHTKQMKLLPTMIVLSTLVLPMTPALSSLN</sequence>
<protein>
    <recommendedName>
        <fullName evidence="1">NADH-ubiquinone oxidoreductase chain 2</fullName>
        <ecNumber evidence="1">7.1.1.2</ecNumber>
    </recommendedName>
    <alternativeName>
        <fullName>NADH dehydrogenase subunit 2</fullName>
    </alternativeName>
</protein>